<protein>
    <recommendedName>
        <fullName>Forkhead box protein G1</fullName>
        <shortName>FoxG1</shortName>
    </recommendedName>
</protein>
<evidence type="ECO:0000250" key="1"/>
<evidence type="ECO:0000250" key="2">
    <source>
        <dbReference type="UniProtKB" id="P55316"/>
    </source>
</evidence>
<evidence type="ECO:0000250" key="3">
    <source>
        <dbReference type="UniProtKB" id="Q60987"/>
    </source>
</evidence>
<evidence type="ECO:0000255" key="4">
    <source>
        <dbReference type="PROSITE-ProRule" id="PRU00089"/>
    </source>
</evidence>
<evidence type="ECO:0000256" key="5">
    <source>
        <dbReference type="SAM" id="MobiDB-lite"/>
    </source>
</evidence>
<organism>
    <name type="scientific">Ceratotherium simum</name>
    <name type="common">White rhinoceros</name>
    <name type="synonym">Square-lipped rhinoceros</name>
    <dbReference type="NCBI Taxonomy" id="9807"/>
    <lineage>
        <taxon>Eukaryota</taxon>
        <taxon>Metazoa</taxon>
        <taxon>Chordata</taxon>
        <taxon>Craniata</taxon>
        <taxon>Vertebrata</taxon>
        <taxon>Euteleostomi</taxon>
        <taxon>Mammalia</taxon>
        <taxon>Eutheria</taxon>
        <taxon>Laurasiatheria</taxon>
        <taxon>Perissodactyla</taxon>
        <taxon>Rhinocerotidae</taxon>
        <taxon>Ceratotherium</taxon>
    </lineage>
</organism>
<keyword id="KW-0217">Developmental protein</keyword>
<keyword id="KW-0238">DNA-binding</keyword>
<keyword id="KW-0539">Nucleus</keyword>
<keyword id="KW-0656">Proto-oncogene</keyword>
<keyword id="KW-0804">Transcription</keyword>
<keyword id="KW-0805">Transcription regulation</keyword>
<sequence>MLDMGDRKEVKMIPKSSFSINSLVPEAVQSDNHHASHGHHNSHHPQHHHHHHHHHHHPPPPAPQPPPPPPPPQQPPPAPQPSQARGVPAADDDKGPQQLLLPPPPPPPPAAALDGAKADGLGGKGEPGGGPGELAPVGPDEKEKGAGAGGEEKKGAGEGGKDGEGGKEGEKKNGKYEKPPFSYNALIMMAIRQSPEKRLTLNGIYEFIMKNFPYYRENKQGWQNSIRHNLSLNKCFVKVPRHYDDPGKGNYWMLDPSSDDVFIGGTTGKLRRRSTTSRAKLAFKRGARLTSTGLTFMDRAGSLYWPMSPFLSLHHPRASSTLSYNGTTSAYPSHPMPYSSVLTQNSLGNNHSFSTANGLSVDRLVNGEIPYATHHLTAAALAASVPCGLSVPCSGTYSLNPCSVNLLAGQTSYFFPHVPHPSMTSQSSTSMSARAASSSTSPQAPSTLPCESLRPSLPSFTTGLSGGLSDYFTHQNQGSSSNPLIH</sequence>
<name>FOXG1_CERSI</name>
<reference key="1">
    <citation type="submission" date="2006-02" db="EMBL/GenBank/DDBJ databases">
        <title>Evolutionary evolution of forkhead box G1.</title>
        <authorList>
            <person name="Bredenkamp N."/>
            <person name="Illing N."/>
        </authorList>
    </citation>
    <scope>NUCLEOTIDE SEQUENCE [GENOMIC DNA]</scope>
</reference>
<dbReference type="EMBL" id="DQ387966">
    <property type="protein sequence ID" value="ABD38849.1"/>
    <property type="molecule type" value="Genomic_DNA"/>
</dbReference>
<dbReference type="BMRB" id="Q1A1A1"/>
<dbReference type="SMR" id="Q1A1A1"/>
<dbReference type="GO" id="GO:0005634">
    <property type="term" value="C:nucleus"/>
    <property type="evidence" value="ECO:0007669"/>
    <property type="project" value="UniProtKB-SubCell"/>
</dbReference>
<dbReference type="GO" id="GO:0003700">
    <property type="term" value="F:DNA-binding transcription factor activity"/>
    <property type="evidence" value="ECO:0007669"/>
    <property type="project" value="InterPro"/>
</dbReference>
<dbReference type="GO" id="GO:1990837">
    <property type="term" value="F:sequence-specific double-stranded DNA binding"/>
    <property type="evidence" value="ECO:0007669"/>
    <property type="project" value="TreeGrafter"/>
</dbReference>
<dbReference type="GO" id="GO:0006357">
    <property type="term" value="P:regulation of transcription by RNA polymerase II"/>
    <property type="evidence" value="ECO:0007669"/>
    <property type="project" value="TreeGrafter"/>
</dbReference>
<dbReference type="CDD" id="cd20021">
    <property type="entry name" value="FH_FOXG"/>
    <property type="match status" value="1"/>
</dbReference>
<dbReference type="FunFam" id="1.10.10.10:FF:000135">
    <property type="entry name" value="forkhead box protein G1"/>
    <property type="match status" value="1"/>
</dbReference>
<dbReference type="Gene3D" id="1.10.10.10">
    <property type="entry name" value="Winged helix-like DNA-binding domain superfamily/Winged helix DNA-binding domain"/>
    <property type="match status" value="1"/>
</dbReference>
<dbReference type="InterPro" id="IPR001766">
    <property type="entry name" value="Fork_head_dom"/>
</dbReference>
<dbReference type="InterPro" id="IPR047208">
    <property type="entry name" value="FOXG1"/>
</dbReference>
<dbReference type="InterPro" id="IPR018122">
    <property type="entry name" value="TF_fork_head_CS_1"/>
</dbReference>
<dbReference type="InterPro" id="IPR030456">
    <property type="entry name" value="TF_fork_head_CS_2"/>
</dbReference>
<dbReference type="InterPro" id="IPR036388">
    <property type="entry name" value="WH-like_DNA-bd_sf"/>
</dbReference>
<dbReference type="InterPro" id="IPR036390">
    <property type="entry name" value="WH_DNA-bd_sf"/>
</dbReference>
<dbReference type="PANTHER" id="PTHR46617">
    <property type="entry name" value="FORKHEAD BOX PROTEIN G1"/>
    <property type="match status" value="1"/>
</dbReference>
<dbReference type="PANTHER" id="PTHR46617:SF3">
    <property type="entry name" value="FORKHEAD BOX PROTEIN G1"/>
    <property type="match status" value="1"/>
</dbReference>
<dbReference type="Pfam" id="PF00250">
    <property type="entry name" value="Forkhead"/>
    <property type="match status" value="1"/>
</dbReference>
<dbReference type="PRINTS" id="PR00053">
    <property type="entry name" value="FORKHEAD"/>
</dbReference>
<dbReference type="SMART" id="SM00339">
    <property type="entry name" value="FH"/>
    <property type="match status" value="1"/>
</dbReference>
<dbReference type="SUPFAM" id="SSF46785">
    <property type="entry name" value="Winged helix' DNA-binding domain"/>
    <property type="match status" value="1"/>
</dbReference>
<dbReference type="PROSITE" id="PS00657">
    <property type="entry name" value="FORK_HEAD_1"/>
    <property type="match status" value="1"/>
</dbReference>
<dbReference type="PROSITE" id="PS00658">
    <property type="entry name" value="FORK_HEAD_2"/>
    <property type="match status" value="1"/>
</dbReference>
<dbReference type="PROSITE" id="PS50039">
    <property type="entry name" value="FORK_HEAD_3"/>
    <property type="match status" value="1"/>
</dbReference>
<proteinExistence type="inferred from homology"/>
<comment type="function">
    <text evidence="2">Transcription repression factor which plays an important role in the establishment of the regional subdivision of the developing brain and in the development of the telencephalon.</text>
</comment>
<comment type="subunit">
    <text evidence="2 3">Interacts with KDM5B (By similarity). Interacts with GRG6/TLE6 (By similarity). Interacts with TLE1; the interaction is inhibited by interaction with TLE6/GRG6 (By similarity).</text>
</comment>
<comment type="subcellular location">
    <subcellularLocation>
        <location evidence="4">Nucleus</location>
    </subcellularLocation>
</comment>
<accession>Q1A1A1</accession>
<feature type="chain" id="PRO_0000254885" description="Forkhead box protein G1">
    <location>
        <begin position="1"/>
        <end position="486"/>
    </location>
</feature>
<feature type="DNA-binding region" description="Fork-head" evidence="4">
    <location>
        <begin position="178"/>
        <end position="272"/>
    </location>
</feature>
<feature type="region of interest" description="Disordered" evidence="5">
    <location>
        <begin position="30"/>
        <end position="178"/>
    </location>
</feature>
<feature type="region of interest" description="Required for interaction with TLE6" evidence="3">
    <location>
        <begin position="246"/>
        <end position="341"/>
    </location>
</feature>
<feature type="region of interest" description="Interaction with KDM5B" evidence="1">
    <location>
        <begin position="380"/>
        <end position="403"/>
    </location>
</feature>
<feature type="region of interest" description="Disordered" evidence="5">
    <location>
        <begin position="424"/>
        <end position="452"/>
    </location>
</feature>
<feature type="compositionally biased region" description="Basic residues" evidence="5">
    <location>
        <begin position="35"/>
        <end position="58"/>
    </location>
</feature>
<feature type="compositionally biased region" description="Pro residues" evidence="5">
    <location>
        <begin position="59"/>
        <end position="80"/>
    </location>
</feature>
<feature type="compositionally biased region" description="Pro residues" evidence="5">
    <location>
        <begin position="101"/>
        <end position="110"/>
    </location>
</feature>
<feature type="compositionally biased region" description="Gly residues" evidence="5">
    <location>
        <begin position="120"/>
        <end position="132"/>
    </location>
</feature>
<feature type="compositionally biased region" description="Basic and acidic residues" evidence="5">
    <location>
        <begin position="139"/>
        <end position="178"/>
    </location>
</feature>
<feature type="compositionally biased region" description="Low complexity" evidence="5">
    <location>
        <begin position="424"/>
        <end position="447"/>
    </location>
</feature>
<gene>
    <name type="primary">FOXG1</name>
</gene>